<evidence type="ECO:0000255" key="1">
    <source>
        <dbReference type="HAMAP-Rule" id="MF_01631"/>
    </source>
</evidence>
<organism>
    <name type="scientific">Cupriavidus metallidurans (strain ATCC 43123 / DSM 2839 / NBRC 102507 / CH34)</name>
    <name type="common">Ralstonia metallidurans</name>
    <dbReference type="NCBI Taxonomy" id="266264"/>
    <lineage>
        <taxon>Bacteria</taxon>
        <taxon>Pseudomonadati</taxon>
        <taxon>Pseudomonadota</taxon>
        <taxon>Betaproteobacteria</taxon>
        <taxon>Burkholderiales</taxon>
        <taxon>Burkholderiaceae</taxon>
        <taxon>Cupriavidus</taxon>
    </lineage>
</organism>
<keyword id="KW-0012">Acyltransferase</keyword>
<keyword id="KW-0133">Cell shape</keyword>
<keyword id="KW-0961">Cell wall biogenesis/degradation</keyword>
<keyword id="KW-0963">Cytoplasm</keyword>
<keyword id="KW-0460">Magnesium</keyword>
<keyword id="KW-0479">Metal-binding</keyword>
<keyword id="KW-0511">Multifunctional enzyme</keyword>
<keyword id="KW-0548">Nucleotidyltransferase</keyword>
<keyword id="KW-0573">Peptidoglycan synthesis</keyword>
<keyword id="KW-1185">Reference proteome</keyword>
<keyword id="KW-0677">Repeat</keyword>
<keyword id="KW-0808">Transferase</keyword>
<comment type="function">
    <text evidence="1">Catalyzes the last two sequential reactions in the de novo biosynthetic pathway for UDP-N-acetylglucosamine (UDP-GlcNAc). The C-terminal domain catalyzes the transfer of acetyl group from acetyl coenzyme A to glucosamine-1-phosphate (GlcN-1-P) to produce N-acetylglucosamine-1-phosphate (GlcNAc-1-P), which is converted into UDP-GlcNAc by the transfer of uridine 5-monophosphate (from uridine 5-triphosphate), a reaction catalyzed by the N-terminal domain.</text>
</comment>
<comment type="catalytic activity">
    <reaction evidence="1">
        <text>alpha-D-glucosamine 1-phosphate + acetyl-CoA = N-acetyl-alpha-D-glucosamine 1-phosphate + CoA + H(+)</text>
        <dbReference type="Rhea" id="RHEA:13725"/>
        <dbReference type="ChEBI" id="CHEBI:15378"/>
        <dbReference type="ChEBI" id="CHEBI:57287"/>
        <dbReference type="ChEBI" id="CHEBI:57288"/>
        <dbReference type="ChEBI" id="CHEBI:57776"/>
        <dbReference type="ChEBI" id="CHEBI:58516"/>
        <dbReference type="EC" id="2.3.1.157"/>
    </reaction>
</comment>
<comment type="catalytic activity">
    <reaction evidence="1">
        <text>N-acetyl-alpha-D-glucosamine 1-phosphate + UTP + H(+) = UDP-N-acetyl-alpha-D-glucosamine + diphosphate</text>
        <dbReference type="Rhea" id="RHEA:13509"/>
        <dbReference type="ChEBI" id="CHEBI:15378"/>
        <dbReference type="ChEBI" id="CHEBI:33019"/>
        <dbReference type="ChEBI" id="CHEBI:46398"/>
        <dbReference type="ChEBI" id="CHEBI:57705"/>
        <dbReference type="ChEBI" id="CHEBI:57776"/>
        <dbReference type="EC" id="2.7.7.23"/>
    </reaction>
</comment>
<comment type="cofactor">
    <cofactor evidence="1">
        <name>Mg(2+)</name>
        <dbReference type="ChEBI" id="CHEBI:18420"/>
    </cofactor>
    <text evidence="1">Binds 1 Mg(2+) ion per subunit.</text>
</comment>
<comment type="pathway">
    <text evidence="1">Nucleotide-sugar biosynthesis; UDP-N-acetyl-alpha-D-glucosamine biosynthesis; N-acetyl-alpha-D-glucosamine 1-phosphate from alpha-D-glucosamine 6-phosphate (route II): step 2/2.</text>
</comment>
<comment type="pathway">
    <text evidence="1">Nucleotide-sugar biosynthesis; UDP-N-acetyl-alpha-D-glucosamine biosynthesis; UDP-N-acetyl-alpha-D-glucosamine from N-acetyl-alpha-D-glucosamine 1-phosphate: step 1/1.</text>
</comment>
<comment type="pathway">
    <text evidence="1">Bacterial outer membrane biogenesis; LPS lipid A biosynthesis.</text>
</comment>
<comment type="subunit">
    <text evidence="1">Homotrimer.</text>
</comment>
<comment type="subcellular location">
    <subcellularLocation>
        <location evidence="1">Cytoplasm</location>
    </subcellularLocation>
</comment>
<comment type="similarity">
    <text evidence="1">In the N-terminal section; belongs to the N-acetylglucosamine-1-phosphate uridyltransferase family.</text>
</comment>
<comment type="similarity">
    <text evidence="1">In the C-terminal section; belongs to the transferase hexapeptide repeat family.</text>
</comment>
<feature type="chain" id="PRO_0000263147" description="Bifunctional protein GlmU">
    <location>
        <begin position="1"/>
        <end position="454"/>
    </location>
</feature>
<feature type="region of interest" description="Pyrophosphorylase" evidence="1">
    <location>
        <begin position="1"/>
        <end position="225"/>
    </location>
</feature>
<feature type="region of interest" description="Linker" evidence="1">
    <location>
        <begin position="226"/>
        <end position="246"/>
    </location>
</feature>
<feature type="region of interest" description="N-acetyltransferase" evidence="1">
    <location>
        <begin position="247"/>
        <end position="454"/>
    </location>
</feature>
<feature type="active site" description="Proton acceptor" evidence="1">
    <location>
        <position position="359"/>
    </location>
</feature>
<feature type="binding site" evidence="1">
    <location>
        <begin position="6"/>
        <end position="9"/>
    </location>
    <ligand>
        <name>UDP-N-acetyl-alpha-D-glucosamine</name>
        <dbReference type="ChEBI" id="CHEBI:57705"/>
    </ligand>
</feature>
<feature type="binding site" evidence="1">
    <location>
        <position position="20"/>
    </location>
    <ligand>
        <name>UDP-N-acetyl-alpha-D-glucosamine</name>
        <dbReference type="ChEBI" id="CHEBI:57705"/>
    </ligand>
</feature>
<feature type="binding site" evidence="1">
    <location>
        <position position="71"/>
    </location>
    <ligand>
        <name>UDP-N-acetyl-alpha-D-glucosamine</name>
        <dbReference type="ChEBI" id="CHEBI:57705"/>
    </ligand>
</feature>
<feature type="binding site" evidence="1">
    <location>
        <begin position="76"/>
        <end position="77"/>
    </location>
    <ligand>
        <name>UDP-N-acetyl-alpha-D-glucosamine</name>
        <dbReference type="ChEBI" id="CHEBI:57705"/>
    </ligand>
</feature>
<feature type="binding site" evidence="1">
    <location>
        <begin position="98"/>
        <end position="100"/>
    </location>
    <ligand>
        <name>UDP-N-acetyl-alpha-D-glucosamine</name>
        <dbReference type="ChEBI" id="CHEBI:57705"/>
    </ligand>
</feature>
<feature type="binding site" evidence="1">
    <location>
        <position position="100"/>
    </location>
    <ligand>
        <name>Mg(2+)</name>
        <dbReference type="ChEBI" id="CHEBI:18420"/>
    </ligand>
</feature>
<feature type="binding site" evidence="1">
    <location>
        <position position="135"/>
    </location>
    <ligand>
        <name>UDP-N-acetyl-alpha-D-glucosamine</name>
        <dbReference type="ChEBI" id="CHEBI:57705"/>
    </ligand>
</feature>
<feature type="binding site" evidence="1">
    <location>
        <position position="150"/>
    </location>
    <ligand>
        <name>UDP-N-acetyl-alpha-D-glucosamine</name>
        <dbReference type="ChEBI" id="CHEBI:57705"/>
    </ligand>
</feature>
<feature type="binding site" evidence="1">
    <location>
        <position position="165"/>
    </location>
    <ligand>
        <name>UDP-N-acetyl-alpha-D-glucosamine</name>
        <dbReference type="ChEBI" id="CHEBI:57705"/>
    </ligand>
</feature>
<feature type="binding site" evidence="1">
    <location>
        <position position="223"/>
    </location>
    <ligand>
        <name>Mg(2+)</name>
        <dbReference type="ChEBI" id="CHEBI:18420"/>
    </ligand>
</feature>
<feature type="binding site" evidence="1">
    <location>
        <position position="223"/>
    </location>
    <ligand>
        <name>UDP-N-acetyl-alpha-D-glucosamine</name>
        <dbReference type="ChEBI" id="CHEBI:57705"/>
    </ligand>
</feature>
<feature type="binding site" evidence="1">
    <location>
        <position position="329"/>
    </location>
    <ligand>
        <name>UDP-N-acetyl-alpha-D-glucosamine</name>
        <dbReference type="ChEBI" id="CHEBI:57705"/>
    </ligand>
</feature>
<feature type="binding site" evidence="1">
    <location>
        <position position="347"/>
    </location>
    <ligand>
        <name>UDP-N-acetyl-alpha-D-glucosamine</name>
        <dbReference type="ChEBI" id="CHEBI:57705"/>
    </ligand>
</feature>
<feature type="binding site" evidence="1">
    <location>
        <position position="362"/>
    </location>
    <ligand>
        <name>UDP-N-acetyl-alpha-D-glucosamine</name>
        <dbReference type="ChEBI" id="CHEBI:57705"/>
    </ligand>
</feature>
<feature type="binding site" evidence="1">
    <location>
        <position position="373"/>
    </location>
    <ligand>
        <name>UDP-N-acetyl-alpha-D-glucosamine</name>
        <dbReference type="ChEBI" id="CHEBI:57705"/>
    </ligand>
</feature>
<feature type="binding site" evidence="1">
    <location>
        <position position="376"/>
    </location>
    <ligand>
        <name>acetyl-CoA</name>
        <dbReference type="ChEBI" id="CHEBI:57288"/>
    </ligand>
</feature>
<feature type="binding site" evidence="1">
    <location>
        <begin position="382"/>
        <end position="383"/>
    </location>
    <ligand>
        <name>acetyl-CoA</name>
        <dbReference type="ChEBI" id="CHEBI:57288"/>
    </ligand>
</feature>
<feature type="binding site" evidence="1">
    <location>
        <position position="401"/>
    </location>
    <ligand>
        <name>acetyl-CoA</name>
        <dbReference type="ChEBI" id="CHEBI:57288"/>
    </ligand>
</feature>
<feature type="binding site" evidence="1">
    <location>
        <position position="419"/>
    </location>
    <ligand>
        <name>acetyl-CoA</name>
        <dbReference type="ChEBI" id="CHEBI:57288"/>
    </ligand>
</feature>
<feature type="binding site" evidence="1">
    <location>
        <position position="436"/>
    </location>
    <ligand>
        <name>acetyl-CoA</name>
        <dbReference type="ChEBI" id="CHEBI:57288"/>
    </ligand>
</feature>
<name>GLMU_CUPMC</name>
<sequence length="454" mass="48654">MNIVILAAGMGKRMNSALPKVLHPVAGQPMLSHVLDTARTLSPSRLVVVVGHGAELVRKAVGADDVAFAEQAQQLGTGHAVMQALPLLDDSQPTLVLYGDVPLTSVDTLKGLVQAAGAERLGVLTVEMPDPTGYGRIVRDAAGNIVRIVEQKDASEDVRAIREINTGIIVCPTAHLRQWLATLRNDNSQGEYYLTDTIERAVNDGVEVVSAQPAALWETLGVNSKVQLAEIERIHQRNIAQRLLEAGVTLLDPARIDVRGELTCGRDVTIDVGCVFEGRVHLEDGVSVGAHCVVRNTTIGAGARIQPFCHFEDAKVGPDGRIGPYARLRPGTELGQDVHIGNFVEIKNSQIADHSKANHLAYVGDATVGQRVNIGAGTITCNYDGVNKHRTVLEDDVFIGSDTQLVAPVTVRRGATIGAGTTLTKEAPADKLTLSRAKQMTLDAWQRPVKQPKK</sequence>
<reference key="1">
    <citation type="journal article" date="2010" name="PLoS ONE">
        <title>The complete genome sequence of Cupriavidus metallidurans strain CH34, a master survivalist in harsh and anthropogenic environments.</title>
        <authorList>
            <person name="Janssen P.J."/>
            <person name="Van Houdt R."/>
            <person name="Moors H."/>
            <person name="Monsieurs P."/>
            <person name="Morin N."/>
            <person name="Michaux A."/>
            <person name="Benotmane M.A."/>
            <person name="Leys N."/>
            <person name="Vallaeys T."/>
            <person name="Lapidus A."/>
            <person name="Monchy S."/>
            <person name="Medigue C."/>
            <person name="Taghavi S."/>
            <person name="McCorkle S."/>
            <person name="Dunn J."/>
            <person name="van der Lelie D."/>
            <person name="Mergeay M."/>
        </authorList>
    </citation>
    <scope>NUCLEOTIDE SEQUENCE [LARGE SCALE GENOMIC DNA]</scope>
    <source>
        <strain>ATCC 43123 / DSM 2839 / NBRC 102507 / CH34</strain>
    </source>
</reference>
<proteinExistence type="inferred from homology"/>
<protein>
    <recommendedName>
        <fullName evidence="1">Bifunctional protein GlmU</fullName>
    </recommendedName>
    <domain>
        <recommendedName>
            <fullName evidence="1">UDP-N-acetylglucosamine pyrophosphorylase</fullName>
            <ecNumber evidence="1">2.7.7.23</ecNumber>
        </recommendedName>
        <alternativeName>
            <fullName evidence="1">N-acetylglucosamine-1-phosphate uridyltransferase</fullName>
        </alternativeName>
    </domain>
    <domain>
        <recommendedName>
            <fullName evidence="1">Glucosamine-1-phosphate N-acetyltransferase</fullName>
            <ecNumber evidence="1">2.3.1.157</ecNumber>
        </recommendedName>
    </domain>
</protein>
<accession>Q1LS04</accession>
<gene>
    <name evidence="1" type="primary">glmU</name>
    <name type="ordered locus">Rmet_0186</name>
</gene>
<dbReference type="EC" id="2.7.7.23" evidence="1"/>
<dbReference type="EC" id="2.3.1.157" evidence="1"/>
<dbReference type="EMBL" id="CP000352">
    <property type="protein sequence ID" value="ABF07072.1"/>
    <property type="molecule type" value="Genomic_DNA"/>
</dbReference>
<dbReference type="RefSeq" id="WP_008641833.1">
    <property type="nucleotide sequence ID" value="NC_007973.1"/>
</dbReference>
<dbReference type="SMR" id="Q1LS04"/>
<dbReference type="STRING" id="266264.Rmet_0186"/>
<dbReference type="KEGG" id="rme:Rmet_0186"/>
<dbReference type="eggNOG" id="COG1207">
    <property type="taxonomic scope" value="Bacteria"/>
</dbReference>
<dbReference type="HOGENOM" id="CLU_029499_15_2_4"/>
<dbReference type="UniPathway" id="UPA00113">
    <property type="reaction ID" value="UER00532"/>
</dbReference>
<dbReference type="UniPathway" id="UPA00113">
    <property type="reaction ID" value="UER00533"/>
</dbReference>
<dbReference type="UniPathway" id="UPA00973"/>
<dbReference type="Proteomes" id="UP000002429">
    <property type="component" value="Chromosome"/>
</dbReference>
<dbReference type="GO" id="GO:0005737">
    <property type="term" value="C:cytoplasm"/>
    <property type="evidence" value="ECO:0007669"/>
    <property type="project" value="UniProtKB-SubCell"/>
</dbReference>
<dbReference type="GO" id="GO:0016020">
    <property type="term" value="C:membrane"/>
    <property type="evidence" value="ECO:0007669"/>
    <property type="project" value="GOC"/>
</dbReference>
<dbReference type="GO" id="GO:0019134">
    <property type="term" value="F:glucosamine-1-phosphate N-acetyltransferase activity"/>
    <property type="evidence" value="ECO:0007669"/>
    <property type="project" value="UniProtKB-UniRule"/>
</dbReference>
<dbReference type="GO" id="GO:0000287">
    <property type="term" value="F:magnesium ion binding"/>
    <property type="evidence" value="ECO:0007669"/>
    <property type="project" value="UniProtKB-UniRule"/>
</dbReference>
<dbReference type="GO" id="GO:0003977">
    <property type="term" value="F:UDP-N-acetylglucosamine diphosphorylase activity"/>
    <property type="evidence" value="ECO:0007669"/>
    <property type="project" value="UniProtKB-UniRule"/>
</dbReference>
<dbReference type="GO" id="GO:0000902">
    <property type="term" value="P:cell morphogenesis"/>
    <property type="evidence" value="ECO:0007669"/>
    <property type="project" value="UniProtKB-UniRule"/>
</dbReference>
<dbReference type="GO" id="GO:0071555">
    <property type="term" value="P:cell wall organization"/>
    <property type="evidence" value="ECO:0007669"/>
    <property type="project" value="UniProtKB-KW"/>
</dbReference>
<dbReference type="GO" id="GO:0009245">
    <property type="term" value="P:lipid A biosynthetic process"/>
    <property type="evidence" value="ECO:0007669"/>
    <property type="project" value="UniProtKB-UniRule"/>
</dbReference>
<dbReference type="GO" id="GO:0009252">
    <property type="term" value="P:peptidoglycan biosynthetic process"/>
    <property type="evidence" value="ECO:0007669"/>
    <property type="project" value="UniProtKB-UniRule"/>
</dbReference>
<dbReference type="GO" id="GO:0008360">
    <property type="term" value="P:regulation of cell shape"/>
    <property type="evidence" value="ECO:0007669"/>
    <property type="project" value="UniProtKB-KW"/>
</dbReference>
<dbReference type="GO" id="GO:0006048">
    <property type="term" value="P:UDP-N-acetylglucosamine biosynthetic process"/>
    <property type="evidence" value="ECO:0007669"/>
    <property type="project" value="UniProtKB-UniPathway"/>
</dbReference>
<dbReference type="CDD" id="cd02540">
    <property type="entry name" value="GT2_GlmU_N_bac"/>
    <property type="match status" value="1"/>
</dbReference>
<dbReference type="CDD" id="cd03353">
    <property type="entry name" value="LbH_GlmU_C"/>
    <property type="match status" value="1"/>
</dbReference>
<dbReference type="Gene3D" id="2.160.10.10">
    <property type="entry name" value="Hexapeptide repeat proteins"/>
    <property type="match status" value="1"/>
</dbReference>
<dbReference type="Gene3D" id="3.90.550.10">
    <property type="entry name" value="Spore Coat Polysaccharide Biosynthesis Protein SpsA, Chain A"/>
    <property type="match status" value="1"/>
</dbReference>
<dbReference type="HAMAP" id="MF_01631">
    <property type="entry name" value="GlmU"/>
    <property type="match status" value="1"/>
</dbReference>
<dbReference type="InterPro" id="IPR005882">
    <property type="entry name" value="Bifunctional_GlmU"/>
</dbReference>
<dbReference type="InterPro" id="IPR050065">
    <property type="entry name" value="GlmU-like"/>
</dbReference>
<dbReference type="InterPro" id="IPR038009">
    <property type="entry name" value="GlmU_C_LbH"/>
</dbReference>
<dbReference type="InterPro" id="IPR001451">
    <property type="entry name" value="Hexapep"/>
</dbReference>
<dbReference type="InterPro" id="IPR025877">
    <property type="entry name" value="MobA-like_NTP_Trfase"/>
</dbReference>
<dbReference type="InterPro" id="IPR029044">
    <property type="entry name" value="Nucleotide-diphossugar_trans"/>
</dbReference>
<dbReference type="InterPro" id="IPR011004">
    <property type="entry name" value="Trimer_LpxA-like_sf"/>
</dbReference>
<dbReference type="NCBIfam" id="TIGR01173">
    <property type="entry name" value="glmU"/>
    <property type="match status" value="1"/>
</dbReference>
<dbReference type="PANTHER" id="PTHR43584:SF3">
    <property type="entry name" value="BIFUNCTIONAL PROTEIN GLMU"/>
    <property type="match status" value="1"/>
</dbReference>
<dbReference type="PANTHER" id="PTHR43584">
    <property type="entry name" value="NUCLEOTIDYL TRANSFERASE"/>
    <property type="match status" value="1"/>
</dbReference>
<dbReference type="Pfam" id="PF14602">
    <property type="entry name" value="Hexapep_2"/>
    <property type="match status" value="1"/>
</dbReference>
<dbReference type="Pfam" id="PF12804">
    <property type="entry name" value="NTP_transf_3"/>
    <property type="match status" value="1"/>
</dbReference>
<dbReference type="SUPFAM" id="SSF53448">
    <property type="entry name" value="Nucleotide-diphospho-sugar transferases"/>
    <property type="match status" value="1"/>
</dbReference>
<dbReference type="SUPFAM" id="SSF51161">
    <property type="entry name" value="Trimeric LpxA-like enzymes"/>
    <property type="match status" value="1"/>
</dbReference>